<accession>Q08050</accession>
<accession>O43258</accession>
<accession>O43259</accession>
<accession>O43260</accession>
<accession>Q4ZGG7</accession>
<accession>Q9BRL2</accession>
<proteinExistence type="evidence at protein level"/>
<evidence type="ECO:0000255" key="1">
    <source>
        <dbReference type="PROSITE-ProRule" id="PRU00089"/>
    </source>
</evidence>
<evidence type="ECO:0000256" key="2">
    <source>
        <dbReference type="SAM" id="MobiDB-lite"/>
    </source>
</evidence>
<evidence type="ECO:0000269" key="3">
    <source>
    </source>
</evidence>
<evidence type="ECO:0000269" key="4">
    <source>
    </source>
</evidence>
<evidence type="ECO:0000269" key="5">
    <source>
    </source>
</evidence>
<evidence type="ECO:0000269" key="6">
    <source>
    </source>
</evidence>
<evidence type="ECO:0000269" key="7">
    <source>
    </source>
</evidence>
<evidence type="ECO:0000269" key="8">
    <source>
    </source>
</evidence>
<evidence type="ECO:0000269" key="9">
    <source>
    </source>
</evidence>
<evidence type="ECO:0000269" key="10">
    <source ref="3"/>
</evidence>
<evidence type="ECO:0000303" key="11">
    <source>
    </source>
</evidence>
<evidence type="ECO:0000303" key="12">
    <source>
    </source>
</evidence>
<evidence type="ECO:0000305" key="13"/>
<evidence type="ECO:0007744" key="14">
    <source>
    </source>
</evidence>
<evidence type="ECO:0007744" key="15">
    <source>
    </source>
</evidence>
<evidence type="ECO:0007744" key="16">
    <source>
    </source>
</evidence>
<evidence type="ECO:0007744" key="17">
    <source>
    </source>
</evidence>
<evidence type="ECO:0007744" key="18">
    <source>
    </source>
</evidence>
<evidence type="ECO:0007744" key="19">
    <source>
    </source>
</evidence>
<evidence type="ECO:0007744" key="20">
    <source>
    </source>
</evidence>
<evidence type="ECO:0007829" key="21">
    <source>
        <dbReference type="PDB" id="3G73"/>
    </source>
</evidence>
<sequence length="763" mass="84283">MKTSPRRPLILKRRRLPLPVQNAPSETSEEEPKRSPAQQESNQAEASKEVAESNSCKFPAGIKIINHPTMPNTQVVAIPNNANIHSIITALTAKGKESGSSGPNKFILISCGGAPTQPPGLRPQTQTSYDAKRTEVTLETLGPKPAARDVNLPRPPGALCEQKRETCADGEAAGCTINNSLSNIQWLRKMSSDGLGSRSIKQEMEEKENCHLEQRQVKVEEPSRPSASWQNSVSERPPYSYMAMIQFAINSTERKRMTLKDIYTWIEDHFPYFKHIAKPGWKNSIRHNLSLHDMFVRETSANGKVSFWTIHPSANRYLTLDQVFKPLDPGSPQLPEHLESQQKRPNPELRRNMTIKTELPLGARRKMKPLLPRVSSYLVPIQFPVNQSLVLQPSVKVPLPLAASLMSSELARHSKRVRIAPKVLLAEEGIAPLSSAGPGKEEKLLFGEGFSPLLPVQTIKEEEIQPGEEMPHLARPIKVESPPLEEWPSPAPSFKEESSHSWEDSSQSPTPRPKKSYSGLRSPTRCVSEMLVIQHRERRERSRSRRKQHLLPPCVDEPELLFSEGPSTSRWAAELPFPADSSDPASQLSYSQEVGGPFKTPIKETLPISSTPSKSVLPRTPESWRLTPPAKVGGLDFSPVQTSQGASDPLPDPLGLMDLSTTPLQSAPPLESPQRLLSSEPLDLISVPFGNSSPSDIDVPKPGSPEPQVSGLAANRSLTEGLVLDTMNDSLSKILLDISFPGLDEDPLGPDNINWSQFIPELQ</sequence>
<name>FOXM1_HUMAN</name>
<reference key="1">
    <citation type="journal article" date="1997" name="Mol. Cell. Biol.">
        <title>Hepatocyte nuclear factor 3/fork head homolog 11 is expressed in proliferating epithelial and mesenchymal cells of embryonic and adult tissues.</title>
        <authorList>
            <person name="Ye H."/>
            <person name="Kelly T.F."/>
            <person name="Samadani U."/>
            <person name="Lim L."/>
            <person name="Rubio S."/>
            <person name="Overdier D.G."/>
            <person name="Roebuck K.A."/>
            <person name="Costa R.H."/>
        </authorList>
    </citation>
    <scope>NUCLEOTIDE SEQUENCE [MRNA] (ISOFORMS 2 AND 4)</scope>
    <source>
        <tissue>Colon carcinoma</tissue>
    </source>
</reference>
<reference key="2">
    <citation type="journal article" date="1997" name="J. Biol. Chem.">
        <title>Molecular analysis of a novel winged helix protein, WIN. Expression pattern, DNA binding property, and alternative splicing within the DNA binding domain.</title>
        <authorList>
            <person name="Yao K.-M."/>
            <person name="Sha M."/>
            <person name="Lu Z."/>
            <person name="Wong G.G."/>
        </authorList>
    </citation>
    <scope>NUCLEOTIDE SEQUENCE [MRNA] (ISOFORM 1)</scope>
    <source>
        <tissue>Pancreatic carcinoma</tissue>
        <tissue>Testis</tissue>
    </source>
</reference>
<reference key="3">
    <citation type="submission" date="2005-04" db="EMBL/GenBank/DDBJ databases">
        <authorList>
            <consortium name="NIEHS SNPs program"/>
        </authorList>
    </citation>
    <scope>NUCLEOTIDE SEQUENCE [GENOMIC DNA]</scope>
    <scope>VARIANTS GLU-402; LEU-450; PRO-643; ARG-669 AND LEU-673</scope>
</reference>
<reference key="4">
    <citation type="journal article" date="2004" name="Genome Res.">
        <title>The status, quality, and expansion of the NIH full-length cDNA project: the Mammalian Gene Collection (MGC).</title>
        <authorList>
            <consortium name="The MGC Project Team"/>
        </authorList>
    </citation>
    <scope>NUCLEOTIDE SEQUENCE [LARGE SCALE MRNA] (ISOFORMS 1 AND 2)</scope>
    <scope>VARIANT PRO-643</scope>
    <source>
        <tissue>Lung</tissue>
        <tissue>Ovary</tissue>
        <tissue>Skin</tissue>
    </source>
</reference>
<reference key="5">
    <citation type="journal article" date="1994" name="Proc. Natl. Acad. Sci. U.S.A.">
        <title>Cloning of cDNAs for M-phase phosphoproteins recognized by the MPM2 monoclonal antibody and determination of the phosphorylated epitope.</title>
        <authorList>
            <person name="Westendorf J.M."/>
            <person name="Rao P.N."/>
            <person name="Gerace L."/>
        </authorList>
    </citation>
    <scope>NUCLEOTIDE SEQUENCE [MRNA] OF 543-763</scope>
    <source>
        <tissue>Lymphoblast</tissue>
    </source>
</reference>
<reference key="6">
    <citation type="journal article" date="2007" name="Mol. Cell. Biol.">
        <title>Chk2 mediates stabilization of the FoxM1 transcription factor to stimulate expression of DNA repair genes.</title>
        <authorList>
            <person name="Tan Y."/>
            <person name="Raychaudhuri P."/>
            <person name="Costa R.H."/>
        </authorList>
    </citation>
    <scope>FUNCTION IN DNA REPAIR</scope>
    <scope>PHOSPHORYLATION AT SER-376 BY CHEK2</scope>
</reference>
<reference key="7">
    <citation type="journal article" date="2008" name="Nat. Cell Biol.">
        <title>Plk1-dependent phosphorylation of FoxM1 regulates a transcriptional programme required for mitotic progression.</title>
        <authorList>
            <person name="Fu Z."/>
            <person name="Malureanu L."/>
            <person name="Huang J."/>
            <person name="Wang W."/>
            <person name="Li H."/>
            <person name="van Deursen J.M."/>
            <person name="Tindall D.J."/>
            <person name="Chen J."/>
        </authorList>
    </citation>
    <scope>FUNCTION</scope>
    <scope>PHOSPHORYLATION AT THR-611; SER-693; SER-730 AND SER-739</scope>
    <scope>MUTAGENESIS OF THR-611; SER-693; SER-730 AND SER-739</scope>
</reference>
<reference key="8">
    <citation type="journal article" date="2008" name="Proc. Natl. Acad. Sci. U.S.A.">
        <title>A quantitative atlas of mitotic phosphorylation.</title>
        <authorList>
            <person name="Dephoure N."/>
            <person name="Zhou C."/>
            <person name="Villen J."/>
            <person name="Beausoleil S.A."/>
            <person name="Bakalarski C.E."/>
            <person name="Elledge S.J."/>
            <person name="Gygi S.P."/>
        </authorList>
    </citation>
    <scope>PHOSPHORYLATION [LARGE SCALE ANALYSIS] AT SER-331; THR-620 AND THR-627</scope>
    <scope>IDENTIFICATION BY MASS SPECTROMETRY [LARGE SCALE ANALYSIS]</scope>
    <source>
        <tissue>Cervix carcinoma</tissue>
    </source>
</reference>
<reference key="9">
    <citation type="journal article" date="2010" name="Sci. Signal.">
        <title>Quantitative phosphoproteomics reveals widespread full phosphorylation site occupancy during mitosis.</title>
        <authorList>
            <person name="Olsen J.V."/>
            <person name="Vermeulen M."/>
            <person name="Santamaria A."/>
            <person name="Kumar C."/>
            <person name="Miller M.L."/>
            <person name="Jensen L.J."/>
            <person name="Gnad F."/>
            <person name="Cox J."/>
            <person name="Jensen T.S."/>
            <person name="Nigg E.A."/>
            <person name="Brunak S."/>
            <person name="Mann M."/>
        </authorList>
    </citation>
    <scope>PHOSPHORYLATION [LARGE SCALE ANALYSIS] AT SER-730 AND SER-739</scope>
    <scope>IDENTIFICATION BY MASS SPECTROMETRY [LARGE SCALE ANALYSIS]</scope>
    <source>
        <tissue>Cervix carcinoma</tissue>
    </source>
</reference>
<reference key="10">
    <citation type="journal article" date="2013" name="J. Proteome Res.">
        <title>Toward a comprehensive characterization of a human cancer cell phosphoproteome.</title>
        <authorList>
            <person name="Zhou H."/>
            <person name="Di Palma S."/>
            <person name="Preisinger C."/>
            <person name="Peng M."/>
            <person name="Polat A.N."/>
            <person name="Heck A.J."/>
            <person name="Mohammed S."/>
        </authorList>
    </citation>
    <scope>PHOSPHORYLATION [LARGE SCALE ANALYSIS] AT SER-522</scope>
    <scope>IDENTIFICATION BY MASS SPECTROMETRY [LARGE SCALE ANALYSIS]</scope>
    <source>
        <tissue>Cervix carcinoma</tissue>
        <tissue>Erythroleukemia</tissue>
    </source>
</reference>
<reference key="11">
    <citation type="journal article" date="2014" name="Nat. Struct. Mol. Biol.">
        <title>Uncovering global SUMOylation signaling networks in a site-specific manner.</title>
        <authorList>
            <person name="Hendriks I.A."/>
            <person name="D'Souza R.C."/>
            <person name="Yang B."/>
            <person name="Verlaan-de Vries M."/>
            <person name="Mann M."/>
            <person name="Vertegaal A.C."/>
        </authorList>
    </citation>
    <scope>SUMOYLATION [LARGE SCALE ANALYSIS] AT LYS-356 AND LYS-440</scope>
    <scope>IDENTIFICATION BY MASS SPECTROMETRY [LARGE SCALE ANALYSIS]</scope>
</reference>
<reference key="12">
    <citation type="journal article" date="2015" name="Cell Rep.">
        <title>SUMO-2 orchestrates chromatin modifiers in response to DNA damage.</title>
        <authorList>
            <person name="Hendriks I.A."/>
            <person name="Treffers L.W."/>
            <person name="Verlaan-de Vries M."/>
            <person name="Olsen J.V."/>
            <person name="Vertegaal A.C."/>
        </authorList>
    </citation>
    <scope>SUMOYLATION [LARGE SCALE ANALYSIS] AT LYS-201; LYS-356 AND LYS-422</scope>
    <scope>IDENTIFICATION BY MASS SPECTROMETRY [LARGE SCALE ANALYSIS]</scope>
</reference>
<reference key="13">
    <citation type="journal article" date="2015" name="Mol. Cell. Proteomics">
        <title>System-wide analysis of SUMOylation dynamics in response to replication stress reveals novel small ubiquitin-like modified target proteins and acceptor lysines relevant for genome stability.</title>
        <authorList>
            <person name="Xiao Z."/>
            <person name="Chang J.G."/>
            <person name="Hendriks I.A."/>
            <person name="Sigurdsson J.O."/>
            <person name="Olsen J.V."/>
            <person name="Vertegaal A.C."/>
        </authorList>
    </citation>
    <scope>SUMOYLATION [LARGE SCALE ANALYSIS] AT LYS-201 AND LYS-356</scope>
    <scope>IDENTIFICATION BY MASS SPECTROMETRY [LARGE SCALE ANALYSIS]</scope>
</reference>
<reference key="14">
    <citation type="journal article" date="2016" name="EMBO J.">
        <title>Wnt-induced deubiquitination FoxM1 ensures nucleus beta-catenin transactivation.</title>
        <authorList>
            <person name="Chen Y."/>
            <person name="Li Y."/>
            <person name="Xue J."/>
            <person name="Gong A."/>
            <person name="Yu G."/>
            <person name="Zhou A."/>
            <person name="Lin K."/>
            <person name="Zhang S."/>
            <person name="Zhang N."/>
            <person name="Gottardi C.J."/>
            <person name="Huang S."/>
        </authorList>
    </citation>
    <scope>FUNCTION</scope>
    <scope>PHOSPHORYLATION AT SER-489</scope>
    <scope>UBIQUITINATION BY FBXW7</scope>
    <scope>DEUBIQUITINATION BY USP5</scope>
    <scope>MUTAGENESIS OF SER-489</scope>
</reference>
<reference key="15">
    <citation type="journal article" date="2017" name="Nat. Struct. Mol. Biol.">
        <title>Site-specific mapping of the human SUMO proteome reveals co-modification with phosphorylation.</title>
        <authorList>
            <person name="Hendriks I.A."/>
            <person name="Lyon D."/>
            <person name="Young C."/>
            <person name="Jensen L.J."/>
            <person name="Vertegaal A.C."/>
            <person name="Nielsen M.L."/>
        </authorList>
    </citation>
    <scope>SUMOYLATION [LARGE SCALE ANALYSIS] AT LYS-163; LYS-201; LYS-325; LYS-356; LYS-422 AND LYS-440</scope>
    <scope>IDENTIFICATION BY MASS SPECTROMETRY [LARGE SCALE ANALYSIS]</scope>
</reference>
<reference key="16">
    <citation type="journal article" date="2021" name="Theranostics">
        <title>Cellular senescence in hepatocellular carcinoma induced by a long non-coding RNA-encoded peptide PINT87aa by blocking FOXM1-mediated PHB2.</title>
        <authorList>
            <person name="Xiang X."/>
            <person name="Fu Y."/>
            <person name="Zhao K."/>
            <person name="Miao R."/>
            <person name="Zhang X."/>
            <person name="Ma X."/>
            <person name="Liu C."/>
            <person name="Zhang N."/>
            <person name="Qu K."/>
        </authorList>
    </citation>
    <scope>FUNCTION</scope>
    <scope>INTERACTION WITH PINT87AA</scope>
</reference>
<reference key="17">
    <citation type="journal article" date="2018" name="Science">
        <title>An intrinsic S/G2 checkpoint enforced by ATR.</title>
        <authorList>
            <person name="Saldivar J.C."/>
            <person name="Hamperl S."/>
            <person name="Bocek M.J."/>
            <person name="Chung M."/>
            <person name="Bass T.E."/>
            <person name="Cisneros-Soberanis F."/>
            <person name="Samejima K."/>
            <person name="Xie L."/>
            <person name="Paulson J.R."/>
            <person name="Earnshaw W.C."/>
            <person name="Cortez D."/>
            <person name="Meyer T."/>
            <person name="Cimprich K.A."/>
        </authorList>
    </citation>
    <scope>PHOSPHORYLATION</scope>
</reference>
<reference key="18">
    <citation type="journal article" date="2010" name="Nucleic Acids Res.">
        <title>Structure of the FoxM1 DNA-recognition domain bound to a promoter sequence.</title>
        <authorList>
            <person name="Littler D.R."/>
            <person name="Alvarez-Fernandez M."/>
            <person name="Stein A."/>
            <person name="Hibbert R.G."/>
            <person name="Heidebrecht T."/>
            <person name="Aloy P."/>
            <person name="Medema R.H."/>
            <person name="Perrakis A."/>
        </authorList>
    </citation>
    <scope>X-RAY CRYSTALLOGRAPHY (2.21 ANGSTROMS) OF 222-360 IN COMPLEX WITH PROMOTER DNA</scope>
    <scope>FUNCTION</scope>
</reference>
<protein>
    <recommendedName>
        <fullName>Forkhead box protein M1</fullName>
    </recommendedName>
    <alternativeName>
        <fullName>Forkhead-related protein FKHL16</fullName>
    </alternativeName>
    <alternativeName>
        <fullName>Hepatocyte nuclear factor 3 forkhead homolog 11</fullName>
        <shortName>HFH-11</shortName>
        <shortName>HNF-3/fork-head homolog 11</shortName>
    </alternativeName>
    <alternativeName>
        <fullName>M-phase phosphoprotein 2</fullName>
    </alternativeName>
    <alternativeName>
        <fullName>MPM-2 reactive phosphoprotein 2</fullName>
    </alternativeName>
    <alternativeName>
        <fullName>Transcription factor Trident</fullName>
    </alternativeName>
    <alternativeName>
        <fullName>Winged-helix factor from INS-1 cells</fullName>
    </alternativeName>
</protein>
<gene>
    <name type="primary">FOXM1</name>
    <name type="synonym">FKHL16</name>
    <name type="synonym">HFH11</name>
    <name type="synonym">MPP2</name>
    <name type="synonym">WIN</name>
</gene>
<organism>
    <name type="scientific">Homo sapiens</name>
    <name type="common">Human</name>
    <dbReference type="NCBI Taxonomy" id="9606"/>
    <lineage>
        <taxon>Eukaryota</taxon>
        <taxon>Metazoa</taxon>
        <taxon>Chordata</taxon>
        <taxon>Craniata</taxon>
        <taxon>Vertebrata</taxon>
        <taxon>Euteleostomi</taxon>
        <taxon>Mammalia</taxon>
        <taxon>Eutheria</taxon>
        <taxon>Euarchontoglires</taxon>
        <taxon>Primates</taxon>
        <taxon>Haplorrhini</taxon>
        <taxon>Catarrhini</taxon>
        <taxon>Hominidae</taxon>
        <taxon>Homo</taxon>
    </lineage>
</organism>
<comment type="function">
    <text evidence="4 5 6 9">Transcription factor regulating the expression of cell cycle genes essential for DNA replication and mitosis (PubMed:19160488, PubMed:20360045). Plays a role in the control of cell proliferation (PubMed:19160488). Also plays a role in DNA break repair, participating in the DNA damage checkpoint response (PubMed:17101782). Promotes transcription of PHB2 (PubMed:33754036).</text>
</comment>
<comment type="subunit">
    <text evidence="9">Interacts with PINT87aa which is encoded by the circular form of the long non-coding RNA LINC-PINT; the interaction inhibits FOXM1-mediated transcription of PHB2.</text>
</comment>
<comment type="interaction">
    <interactant intactId="EBI-866480">
        <id>Q08050</id>
    </interactant>
    <interactant intactId="EBI-11524452">
        <id>Q8N9N5-2</id>
        <label>BANP</label>
    </interactant>
    <organismsDiffer>false</organismsDiffer>
    <experiments>3</experiments>
</comment>
<comment type="interaction">
    <interactant intactId="EBI-866480">
        <id>Q08050</id>
    </interactant>
    <interactant intactId="EBI-16429296">
        <id>Q8N9N5-7</id>
        <label>BANP</label>
    </interactant>
    <organismsDiffer>false</organismsDiffer>
    <experiments>3</experiments>
</comment>
<comment type="interaction">
    <interactant intactId="EBI-866480">
        <id>Q08050</id>
    </interactant>
    <interactant intactId="EBI-519526">
        <id>P24864</id>
        <label>CCNE1</label>
    </interactant>
    <organismsDiffer>false</organismsDiffer>
    <experiments>2</experiments>
</comment>
<comment type="interaction">
    <interactant intactId="EBI-866480">
        <id>Q08050</id>
    </interactant>
    <interactant intactId="EBI-491549">
        <id>P35222</id>
        <label>CTNNB1</label>
    </interactant>
    <organismsDiffer>false</organismsDiffer>
    <experiments>16</experiments>
</comment>
<comment type="interaction">
    <interactant intactId="EBI-866480">
        <id>Q08050</id>
    </interactant>
    <interactant intactId="EBI-358730">
        <id>P14868</id>
        <label>DARS1</label>
    </interactant>
    <organismsDiffer>false</organismsDiffer>
    <experiments>2</experiments>
</comment>
<comment type="interaction">
    <interactant intactId="EBI-866480">
        <id>Q08050</id>
    </interactant>
    <interactant intactId="EBI-1644164">
        <id>O43524</id>
        <label>FOXO3</label>
    </interactant>
    <organismsDiffer>false</organismsDiffer>
    <experiments>2</experiments>
</comment>
<comment type="interaction">
    <interactant intactId="EBI-866480">
        <id>Q08050</id>
    </interactant>
    <interactant intactId="EBI-27121529">
        <id>A0A455ZAR2</id>
        <label>LINC-PINT</label>
    </interactant>
    <organismsDiffer>false</organismsDiffer>
    <experiments>4</experiments>
</comment>
<comment type="interaction">
    <interactant intactId="EBI-866480">
        <id>Q08050</id>
    </interactant>
    <interactant intactId="EBI-374957">
        <id>Q13416</id>
        <label>ORC2</label>
    </interactant>
    <organismsDiffer>false</organismsDiffer>
    <experiments>2</experiments>
</comment>
<comment type="interaction">
    <interactant intactId="EBI-866480">
        <id>Q08050</id>
    </interactant>
    <interactant intactId="EBI-1053271">
        <id>O00541</id>
        <label>PES1</label>
    </interactant>
    <organismsDiffer>false</organismsDiffer>
    <experiments>2</experiments>
</comment>
<comment type="interaction">
    <interactant intactId="EBI-866480">
        <id>Q08050</id>
    </interactant>
    <interactant intactId="EBI-748480">
        <id>O75152</id>
        <label>ZC3H11A</label>
    </interactant>
    <organismsDiffer>false</organismsDiffer>
    <experiments>2</experiments>
</comment>
<comment type="interaction">
    <interactant intactId="EBI-866499">
        <id>Q08050-1</id>
    </interactant>
    <interactant intactId="EBI-295663">
        <id>Q00534</id>
        <label>CDK6</label>
    </interactant>
    <organismsDiffer>false</organismsDiffer>
    <experiments>2</experiments>
</comment>
<comment type="interaction">
    <interactant intactId="EBI-866499">
        <id>Q08050-1</id>
    </interactant>
    <interactant intactId="EBI-866453">
        <id>P03129</id>
        <label>E7</label>
    </interactant>
    <organismsDiffer>true</organismsDiffer>
    <experiments>3</experiments>
</comment>
<comment type="interaction">
    <interactant intactId="EBI-5237510">
        <id>Q08050-2</id>
    </interactant>
    <interactant intactId="EBI-16429313">
        <id>B4DE54</id>
        <label>BANP</label>
    </interactant>
    <organismsDiffer>false</organismsDiffer>
    <experiments>3</experiments>
</comment>
<comment type="interaction">
    <interactant intactId="EBI-5237510">
        <id>Q08050-2</id>
    </interactant>
    <interactant intactId="EBI-11524452">
        <id>Q8N9N5-2</id>
        <label>BANP</label>
    </interactant>
    <organismsDiffer>false</organismsDiffer>
    <experiments>3</experiments>
</comment>
<comment type="interaction">
    <interactant intactId="EBI-5237510">
        <id>Q08050-2</id>
    </interactant>
    <interactant intactId="EBI-16429296">
        <id>Q8N9N5-7</id>
        <label>BANP</label>
    </interactant>
    <organismsDiffer>false</organismsDiffer>
    <experiments>3</experiments>
</comment>
<comment type="subcellular location">
    <subcellularLocation>
        <location>Nucleus</location>
    </subcellularLocation>
</comment>
<comment type="alternative products">
    <event type="alternative splicing"/>
    <isoform>
        <id>Q08050-1</id>
        <name>1</name>
        <name>FoxM1C</name>
        <name>FOXM1-c</name>
        <sequence type="displayed"/>
    </isoform>
    <isoform>
        <id>Q08050-2</id>
        <name>2</name>
        <name>FoxM1B</name>
        <name>FOXM1-b</name>
        <sequence type="described" ref="VSP_001547"/>
    </isoform>
    <isoform>
        <id>Q08050-3</id>
        <name>4</name>
        <name>FoxM1A</name>
        <name>FOXM1-a</name>
        <sequence type="described" ref="VSP_001548"/>
    </isoform>
    <text>Isoform 1 and isoform 2 appear to be the only activators of gene transcription. Isoform 3, found in rat, does not seem to exist in human.</text>
</comment>
<comment type="tissue specificity">
    <text>Expressed in thymus, testis, small intestine, colon followed by ovary. Appears to be expressed only in adult organs containing proliferating/cycling cells or in response to growth factors. Also expressed in epithelial cell lines derived from tumors. Not expressed in resting cells. Isoform 2 is highly expressed in testis.</text>
</comment>
<comment type="developmental stage">
    <text>Embryonic expression pattern: liver, lung, intestine, kidney, urinary tract; adult expression pattern: intestine, colon, testis and thymus.</text>
</comment>
<comment type="induction">
    <text>Induced during liver regeneration and oxidative stress.</text>
</comment>
<comment type="domain">
    <text>Within the protein there is a domain which acts as a transcriptional activator. Insertion of a splicing sequence within it inactivates this transcriptional activity, as it is the case for isoform 4.</text>
</comment>
<comment type="PTM">
    <text evidence="4 5 7 8">Phosphorylated in M (mitotic) phase (PubMed:17101782, PubMed:19160488, PubMed:30139873). Phosphorylation by the checkpoint kinase CHEK2 in response to DNA damage increases the FOXM1 protein stability probably stimulating the transcription of genes involved in DNA repair (PubMed:17101782). Phosphorylated by CDK1 in late S and G2 phases, creating docking sites for the POLO box domains of PLK1 (PubMed:19160488, PubMed:30139873). Subsequently, PLK1 binds and phosphorylates FOXM1, leading to activation of transcriptional activity and subsequent enhanced expression of key mitotic regulators (PubMed:19160488). Phosphorylated by GSK3B leading to ubiquitination and proteasomal degradation (PubMed:26912724).</text>
</comment>
<comment type="PTM">
    <text evidence="7">Ubiquitinated in a FBXW7-dependent manner leading to proteasomal degradation.</text>
</comment>
<comment type="online information" name="Atlas of Genetics and Cytogenetics in Oncology and Haematology">
    <link uri="https://atlasgeneticsoncology.org/gene/40631/FOXM1"/>
</comment>
<feature type="chain" id="PRO_0000091863" description="Forkhead box protein M1">
    <location>
        <begin position="1"/>
        <end position="763"/>
    </location>
</feature>
<feature type="DNA-binding region" description="Fork-head" evidence="1">
    <location>
        <begin position="235"/>
        <end position="327"/>
    </location>
</feature>
<feature type="region of interest" description="Disordered" evidence="2">
    <location>
        <begin position="1"/>
        <end position="53"/>
    </location>
</feature>
<feature type="region of interest" description="Disordered" evidence="2">
    <location>
        <begin position="198"/>
        <end position="232"/>
    </location>
</feature>
<feature type="region of interest" description="Disordered" evidence="2">
    <location>
        <begin position="329"/>
        <end position="351"/>
    </location>
</feature>
<feature type="region of interest" description="Disordered" evidence="2">
    <location>
        <begin position="482"/>
        <end position="711"/>
    </location>
</feature>
<feature type="compositionally biased region" description="Polar residues" evidence="2">
    <location>
        <begin position="36"/>
        <end position="45"/>
    </location>
</feature>
<feature type="compositionally biased region" description="Basic and acidic residues" evidence="2">
    <location>
        <begin position="200"/>
        <end position="223"/>
    </location>
</feature>
<feature type="compositionally biased region" description="Basic and acidic residues" evidence="2">
    <location>
        <begin position="336"/>
        <end position="351"/>
    </location>
</feature>
<feature type="compositionally biased region" description="Basic and acidic residues" evidence="2">
    <location>
        <begin position="494"/>
        <end position="503"/>
    </location>
</feature>
<feature type="compositionally biased region" description="Polar residues" evidence="2">
    <location>
        <begin position="583"/>
        <end position="592"/>
    </location>
</feature>
<feature type="modified residue" description="Phosphoserine" evidence="14">
    <location>
        <position position="331"/>
    </location>
</feature>
<feature type="modified residue" description="Phosphoserine; by CHEK2" evidence="4">
    <location>
        <position position="376"/>
    </location>
</feature>
<feature type="modified residue" description="Phosphoserine; by GSK3" evidence="4">
    <location>
        <position position="489"/>
    </location>
</feature>
<feature type="modified residue" description="Phosphoserine" evidence="16">
    <location>
        <position position="522"/>
    </location>
</feature>
<feature type="modified residue" description="Phosphothreonine; by CDK1" evidence="5">
    <location>
        <position position="611"/>
    </location>
</feature>
<feature type="modified residue" description="Phosphothreonine" evidence="14">
    <location>
        <position position="620"/>
    </location>
</feature>
<feature type="modified residue" description="Phosphothreonine" evidence="14">
    <location>
        <position position="627"/>
    </location>
</feature>
<feature type="modified residue" description="Phosphothreonine" evidence="13">
    <location>
        <position position="662"/>
    </location>
</feature>
<feature type="modified residue" description="Phosphoserine; by CDK1" evidence="5">
    <location>
        <position position="693"/>
    </location>
</feature>
<feature type="modified residue" description="Phosphoserine; by PLK1" evidence="5 15">
    <location>
        <position position="730"/>
    </location>
</feature>
<feature type="modified residue" description="Phosphoserine; by PLK1" evidence="5 15">
    <location>
        <position position="739"/>
    </location>
</feature>
<feature type="cross-link" description="Glycyl lysine isopeptide (Lys-Gly) (interchain with G-Cter in SUMO2)" evidence="20">
    <location>
        <position position="163"/>
    </location>
</feature>
<feature type="cross-link" description="Glycyl lysine isopeptide (Lys-Gly) (interchain with G-Cter in SUMO2)" evidence="18 19 20">
    <location>
        <position position="201"/>
    </location>
</feature>
<feature type="cross-link" description="Glycyl lysine isopeptide (Lys-Gly) (interchain with G-Cter in SUMO2)" evidence="20">
    <location>
        <position position="325"/>
    </location>
</feature>
<feature type="cross-link" description="Glycyl lysine isopeptide (Lys-Gly) (interchain with G-Cter in SUMO2)" evidence="17 18 19 20">
    <location>
        <position position="356"/>
    </location>
</feature>
<feature type="cross-link" description="Glycyl lysine isopeptide (Lys-Gly) (interchain with G-Cter in SUMO2)" evidence="19 20">
    <location>
        <position position="422"/>
    </location>
</feature>
<feature type="cross-link" description="Glycyl lysine isopeptide (Lys-Gly) (interchain with G-Cter in SUMO2)" evidence="17 20">
    <location>
        <position position="440"/>
    </location>
</feature>
<feature type="splice variant" id="VSP_001547" description="In isoform 2." evidence="11 12">
    <location>
        <begin position="326"/>
        <end position="340"/>
    </location>
</feature>
<feature type="splice variant" id="VSP_001548" description="In isoform 4." evidence="12">
    <original>V</original>
    <variation>VFGEQVVFGYMSKFFSGDLRDFGTPITSLFNFIFLCLSV</variation>
    <location>
        <position position="423"/>
    </location>
</feature>
<feature type="sequence variant" id="VAR_025239" description="In dbSNP:rs28990715." evidence="10">
    <original>A</original>
    <variation>E</variation>
    <location>
        <position position="402"/>
    </location>
</feature>
<feature type="sequence variant" id="VAR_025240" description="In dbSNP:rs28919868." evidence="10">
    <original>F</original>
    <variation>L</variation>
    <location>
        <position position="450"/>
    </location>
</feature>
<feature type="sequence variant" id="VAR_020024" description="In dbSNP:rs3742076." evidence="3 10">
    <original>S</original>
    <variation>P</variation>
    <location>
        <position position="643"/>
    </location>
</feature>
<feature type="sequence variant" id="VAR_025241" description="In dbSNP:rs28919869." evidence="10">
    <original>P</original>
    <variation>R</variation>
    <location>
        <position position="669"/>
    </location>
</feature>
<feature type="sequence variant" id="VAR_025242" description="In dbSNP:rs28919870." evidence="10">
    <original>P</original>
    <variation>L</variation>
    <location>
        <position position="673"/>
    </location>
</feature>
<feature type="mutagenesis site" description="Prevents phosphorylation by GSK3 and subsequent ubiquitination." evidence="7">
    <original>S</original>
    <variation>A</variation>
    <location>
        <position position="489"/>
    </location>
</feature>
<feature type="mutagenesis site" description="Prevents phosphorylation by CDK1 and subsequent binding of POLO box domains of PLK1; when associated with A-693." evidence="5">
    <original>T</original>
    <variation>A</variation>
    <location>
        <position position="611"/>
    </location>
</feature>
<feature type="mutagenesis site" description="Prevents phosphorylation by CDK1 and subsequent binding of POLO box domains of PLK1; when associated with A-611." evidence="5">
    <original>S</original>
    <variation>A</variation>
    <location>
        <position position="693"/>
    </location>
</feature>
<feature type="mutagenesis site" description="Prevents phosphorylation by PLK1 and impairs transcription activity; when associated with A-739." evidence="5">
    <original>S</original>
    <variation>A</variation>
    <location>
        <position position="730"/>
    </location>
</feature>
<feature type="mutagenesis site" description="Prevents phosphorylation by PLK1 and impairs transcription activity; when associated with A-730." evidence="5">
    <original>S</original>
    <variation>A</variation>
    <location>
        <position position="739"/>
    </location>
</feature>
<feature type="sequence conflict" description="In Ref. 2; AAC63595." evidence="13" ref="2">
    <original>T</original>
    <variation>A</variation>
    <location>
        <position position="3"/>
    </location>
</feature>
<feature type="helix" evidence="21">
    <location>
        <begin position="241"/>
        <end position="250"/>
    </location>
</feature>
<feature type="strand" evidence="21">
    <location>
        <begin position="255"/>
        <end position="257"/>
    </location>
</feature>
<feature type="helix" evidence="21">
    <location>
        <begin position="259"/>
        <end position="269"/>
    </location>
</feature>
<feature type="helix" evidence="21">
    <location>
        <begin position="272"/>
        <end position="275"/>
    </location>
</feature>
<feature type="helix" evidence="21">
    <location>
        <begin position="281"/>
        <end position="291"/>
    </location>
</feature>
<feature type="strand" evidence="21">
    <location>
        <begin position="295"/>
        <end position="299"/>
    </location>
</feature>
<feature type="strand" evidence="21">
    <location>
        <begin position="306"/>
        <end position="310"/>
    </location>
</feature>
<feature type="turn" evidence="21">
    <location>
        <begin position="312"/>
        <end position="314"/>
    </location>
</feature>
<keyword id="KW-0002">3D-structure</keyword>
<keyword id="KW-0010">Activator</keyword>
<keyword id="KW-0025">Alternative splicing</keyword>
<keyword id="KW-0131">Cell cycle</keyword>
<keyword id="KW-0227">DNA damage</keyword>
<keyword id="KW-0234">DNA repair</keyword>
<keyword id="KW-0238">DNA-binding</keyword>
<keyword id="KW-1017">Isopeptide bond</keyword>
<keyword id="KW-0539">Nucleus</keyword>
<keyword id="KW-0597">Phosphoprotein</keyword>
<keyword id="KW-1267">Proteomics identification</keyword>
<keyword id="KW-1185">Reference proteome</keyword>
<keyword id="KW-0804">Transcription</keyword>
<keyword id="KW-0805">Transcription regulation</keyword>
<keyword id="KW-0832">Ubl conjugation</keyword>
<dbReference type="EMBL" id="U74612">
    <property type="protein sequence ID" value="AAC51128.1"/>
    <property type="molecule type" value="mRNA"/>
</dbReference>
<dbReference type="EMBL" id="U74613">
    <property type="protein sequence ID" value="AAC51129.1"/>
    <property type="molecule type" value="mRNA"/>
</dbReference>
<dbReference type="EMBL" id="U83113">
    <property type="protein sequence ID" value="AAC63595.1"/>
    <property type="molecule type" value="mRNA"/>
</dbReference>
<dbReference type="EMBL" id="DQ022289">
    <property type="protein sequence ID" value="AAY26401.1"/>
    <property type="molecule type" value="Genomic_DNA"/>
</dbReference>
<dbReference type="EMBL" id="BC006192">
    <property type="protein sequence ID" value="AAH06192.1"/>
    <property type="molecule type" value="mRNA"/>
</dbReference>
<dbReference type="EMBL" id="BC006529">
    <property type="protein sequence ID" value="AAH06529.1"/>
    <property type="molecule type" value="mRNA"/>
</dbReference>
<dbReference type="EMBL" id="BC012863">
    <property type="protein sequence ID" value="AAH12863.1"/>
    <property type="molecule type" value="mRNA"/>
</dbReference>
<dbReference type="EMBL" id="L16783">
    <property type="protein sequence ID" value="AAC37541.1"/>
    <property type="molecule type" value="mRNA"/>
</dbReference>
<dbReference type="CCDS" id="CCDS8515.1">
    <molecule id="Q08050-1"/>
</dbReference>
<dbReference type="CCDS" id="CCDS8516.1">
    <molecule id="Q08050-3"/>
</dbReference>
<dbReference type="CCDS" id="CCDS8517.1">
    <molecule id="Q08050-2"/>
</dbReference>
<dbReference type="PIR" id="B36881">
    <property type="entry name" value="B36881"/>
</dbReference>
<dbReference type="RefSeq" id="NP_001230017.1">
    <property type="nucleotide sequence ID" value="NM_001243088.1"/>
</dbReference>
<dbReference type="RefSeq" id="NP_001230018.1">
    <property type="nucleotide sequence ID" value="NM_001243089.1"/>
</dbReference>
<dbReference type="RefSeq" id="NP_068772.2">
    <molecule id="Q08050-1"/>
    <property type="nucleotide sequence ID" value="NM_021953.3"/>
</dbReference>
<dbReference type="RefSeq" id="NP_973731.1">
    <molecule id="Q08050-3"/>
    <property type="nucleotide sequence ID" value="NM_202002.3"/>
</dbReference>
<dbReference type="RefSeq" id="NP_973732.1">
    <molecule id="Q08050-2"/>
    <property type="nucleotide sequence ID" value="NM_202003.3"/>
</dbReference>
<dbReference type="PDB" id="3G73">
    <property type="method" value="X-ray"/>
    <property type="resolution" value="2.21 A"/>
    <property type="chains" value="A/B=222-360"/>
</dbReference>
<dbReference type="PDB" id="7FJ2">
    <property type="method" value="X-ray"/>
    <property type="resolution" value="3.10 A"/>
    <property type="chains" value="A/B/E/F=222-337"/>
</dbReference>
<dbReference type="PDBsum" id="3G73"/>
<dbReference type="PDBsum" id="7FJ2"/>
<dbReference type="SMR" id="Q08050"/>
<dbReference type="BioGRID" id="108594">
    <property type="interactions" value="120"/>
</dbReference>
<dbReference type="ComplexPortal" id="CPX-7462">
    <property type="entry name" value="Myb-MuvB-FOXM1 transcriptional activation complex"/>
</dbReference>
<dbReference type="CORUM" id="Q08050"/>
<dbReference type="DIP" id="DIP-36754N"/>
<dbReference type="FunCoup" id="Q08050">
    <property type="interactions" value="1542"/>
</dbReference>
<dbReference type="IntAct" id="Q08050">
    <property type="interactions" value="70"/>
</dbReference>
<dbReference type="MINT" id="Q08050"/>
<dbReference type="STRING" id="9606.ENSP00000342307"/>
<dbReference type="BindingDB" id="Q08050"/>
<dbReference type="ChEMBL" id="CHEMBL4739852"/>
<dbReference type="DrugCentral" id="Q08050"/>
<dbReference type="GlyGen" id="Q08050">
    <property type="glycosylation" value="2 sites, 1 O-linked glycan (1 site)"/>
</dbReference>
<dbReference type="iPTMnet" id="Q08050"/>
<dbReference type="PhosphoSitePlus" id="Q08050"/>
<dbReference type="SwissPalm" id="Q08050"/>
<dbReference type="BioMuta" id="FOXM1"/>
<dbReference type="DMDM" id="12644391"/>
<dbReference type="CPTAC" id="CPTAC-1242"/>
<dbReference type="jPOST" id="Q08050"/>
<dbReference type="MassIVE" id="Q08050"/>
<dbReference type="PaxDb" id="9606-ENSP00000342307"/>
<dbReference type="PeptideAtlas" id="Q08050"/>
<dbReference type="ProteomicsDB" id="58567">
    <molecule id="Q08050-1"/>
</dbReference>
<dbReference type="ProteomicsDB" id="58568">
    <molecule id="Q08050-2"/>
</dbReference>
<dbReference type="ProteomicsDB" id="58569">
    <molecule id="Q08050-3"/>
</dbReference>
<dbReference type="Antibodypedia" id="4507">
    <property type="antibodies" value="488 antibodies from 39 providers"/>
</dbReference>
<dbReference type="DNASU" id="2305"/>
<dbReference type="Ensembl" id="ENST00000342628.6">
    <molecule id="Q08050-3"/>
    <property type="protein sequence ID" value="ENSP00000342307.2"/>
    <property type="gene ID" value="ENSG00000111206.13"/>
</dbReference>
<dbReference type="Ensembl" id="ENST00000359843.8">
    <molecule id="Q08050-1"/>
    <property type="protein sequence ID" value="ENSP00000352901.4"/>
    <property type="gene ID" value="ENSG00000111206.13"/>
</dbReference>
<dbReference type="Ensembl" id="ENST00000361953.7">
    <molecule id="Q08050-2"/>
    <property type="protein sequence ID" value="ENSP00000354492.3"/>
    <property type="gene ID" value="ENSG00000111206.13"/>
</dbReference>
<dbReference type="GeneID" id="2305"/>
<dbReference type="KEGG" id="hsa:2305"/>
<dbReference type="MANE-Select" id="ENST00000359843.8">
    <property type="protein sequence ID" value="ENSP00000352901.4"/>
    <property type="RefSeq nucleotide sequence ID" value="NM_021953.4"/>
    <property type="RefSeq protein sequence ID" value="NP_068772.2"/>
</dbReference>
<dbReference type="UCSC" id="uc001qle.4">
    <molecule id="Q08050-1"/>
    <property type="organism name" value="human"/>
</dbReference>
<dbReference type="AGR" id="HGNC:3818"/>
<dbReference type="CTD" id="2305"/>
<dbReference type="DisGeNET" id="2305"/>
<dbReference type="GeneCards" id="FOXM1"/>
<dbReference type="HGNC" id="HGNC:3818">
    <property type="gene designation" value="FOXM1"/>
</dbReference>
<dbReference type="HPA" id="ENSG00000111206">
    <property type="expression patterns" value="Tissue enhanced (bone marrow, lymphoid tissue, testis)"/>
</dbReference>
<dbReference type="MalaCards" id="FOXM1"/>
<dbReference type="MIM" id="602341">
    <property type="type" value="gene"/>
</dbReference>
<dbReference type="neXtProt" id="NX_Q08050"/>
<dbReference type="OpenTargets" id="ENSG00000111206"/>
<dbReference type="PharmGKB" id="PA28236"/>
<dbReference type="VEuPathDB" id="HostDB:ENSG00000111206"/>
<dbReference type="eggNOG" id="KOG2294">
    <property type="taxonomic scope" value="Eukaryota"/>
</dbReference>
<dbReference type="GeneTree" id="ENSGT00940000158804"/>
<dbReference type="HOGENOM" id="CLU_027498_0_0_1"/>
<dbReference type="InParanoid" id="Q08050"/>
<dbReference type="OMA" id="APKQEHR"/>
<dbReference type="OrthoDB" id="5954824at2759"/>
<dbReference type="PAN-GO" id="Q08050">
    <property type="GO annotations" value="5 GO annotations based on evolutionary models"/>
</dbReference>
<dbReference type="PhylomeDB" id="Q08050"/>
<dbReference type="TreeFam" id="TF333250"/>
<dbReference type="PathwayCommons" id="Q08050"/>
<dbReference type="Reactome" id="R-HSA-156711">
    <property type="pathway name" value="Polo-like kinase mediated events"/>
</dbReference>
<dbReference type="Reactome" id="R-HSA-69273">
    <property type="pathway name" value="Cyclin A/B1/B2 associated events during G2/M transition"/>
</dbReference>
<dbReference type="Reactome" id="R-HSA-9725371">
    <property type="pathway name" value="Nuclear events stimulated by ALK signaling in cancer"/>
</dbReference>
<dbReference type="SignaLink" id="Q08050"/>
<dbReference type="SIGNOR" id="Q08050"/>
<dbReference type="BioGRID-ORCS" id="2305">
    <property type="hits" value="205 hits in 1185 CRISPR screens"/>
</dbReference>
<dbReference type="ChiTaRS" id="FOXM1">
    <property type="organism name" value="human"/>
</dbReference>
<dbReference type="EvolutionaryTrace" id="Q08050"/>
<dbReference type="GeneWiki" id="FOXM1"/>
<dbReference type="GenomeRNAi" id="2305"/>
<dbReference type="Pharos" id="Q08050">
    <property type="development level" value="Tchem"/>
</dbReference>
<dbReference type="PRO" id="PR:Q08050"/>
<dbReference type="Proteomes" id="UP000005640">
    <property type="component" value="Chromosome 12"/>
</dbReference>
<dbReference type="RNAct" id="Q08050">
    <property type="molecule type" value="protein"/>
</dbReference>
<dbReference type="Bgee" id="ENSG00000111206">
    <property type="expression patterns" value="Expressed in ventricular zone and 107 other cell types or tissues"/>
</dbReference>
<dbReference type="ExpressionAtlas" id="Q08050">
    <property type="expression patterns" value="baseline and differential"/>
</dbReference>
<dbReference type="GO" id="GO:0000785">
    <property type="term" value="C:chromatin"/>
    <property type="evidence" value="ECO:0000247"/>
    <property type="project" value="NTNU_SB"/>
</dbReference>
<dbReference type="GO" id="GO:0005654">
    <property type="term" value="C:nucleoplasm"/>
    <property type="evidence" value="ECO:0000304"/>
    <property type="project" value="Reactome"/>
</dbReference>
<dbReference type="GO" id="GO:0005634">
    <property type="term" value="C:nucleus"/>
    <property type="evidence" value="ECO:0000318"/>
    <property type="project" value="GO_Central"/>
</dbReference>
<dbReference type="GO" id="GO:0003677">
    <property type="term" value="F:DNA binding"/>
    <property type="evidence" value="ECO:0000314"/>
    <property type="project" value="UniProtKB"/>
</dbReference>
<dbReference type="GO" id="GO:0003700">
    <property type="term" value="F:DNA-binding transcription factor activity"/>
    <property type="evidence" value="ECO:0000314"/>
    <property type="project" value="UniProtKB"/>
</dbReference>
<dbReference type="GO" id="GO:0000981">
    <property type="term" value="F:DNA-binding transcription factor activity, RNA polymerase II-specific"/>
    <property type="evidence" value="ECO:0000247"/>
    <property type="project" value="NTNU_SB"/>
</dbReference>
<dbReference type="GO" id="GO:0019901">
    <property type="term" value="F:protein kinase binding"/>
    <property type="evidence" value="ECO:0000353"/>
    <property type="project" value="UniProtKB"/>
</dbReference>
<dbReference type="GO" id="GO:0000977">
    <property type="term" value="F:RNA polymerase II transcription regulatory region sequence-specific DNA binding"/>
    <property type="evidence" value="ECO:0000314"/>
    <property type="project" value="NTNU_SB"/>
</dbReference>
<dbReference type="GO" id="GO:0030330">
    <property type="term" value="P:DNA damage response, signal transduction by p53 class mediator"/>
    <property type="evidence" value="ECO:0000315"/>
    <property type="project" value="UniProtKB"/>
</dbReference>
<dbReference type="GO" id="GO:0006281">
    <property type="term" value="P:DNA repair"/>
    <property type="evidence" value="ECO:0007669"/>
    <property type="project" value="UniProtKB-KW"/>
</dbReference>
<dbReference type="GO" id="GO:0000086">
    <property type="term" value="P:G2/M transition of mitotic cell cycle"/>
    <property type="evidence" value="ECO:0000314"/>
    <property type="project" value="UniProtKB"/>
</dbReference>
<dbReference type="GO" id="GO:0045892">
    <property type="term" value="P:negative regulation of DNA-templated transcription"/>
    <property type="evidence" value="ECO:0000315"/>
    <property type="project" value="BHF-UCL"/>
</dbReference>
<dbReference type="GO" id="GO:0032873">
    <property type="term" value="P:negative regulation of stress-activated MAPK cascade"/>
    <property type="evidence" value="ECO:0000315"/>
    <property type="project" value="BHF-UCL"/>
</dbReference>
<dbReference type="GO" id="GO:0000122">
    <property type="term" value="P:negative regulation of transcription by RNA polymerase II"/>
    <property type="evidence" value="ECO:0000315"/>
    <property type="project" value="BHF-UCL"/>
</dbReference>
<dbReference type="GO" id="GO:0008284">
    <property type="term" value="P:positive regulation of cell population proliferation"/>
    <property type="evidence" value="ECO:0000315"/>
    <property type="project" value="BHF-UCL"/>
</dbReference>
<dbReference type="GO" id="GO:0045893">
    <property type="term" value="P:positive regulation of DNA-templated transcription"/>
    <property type="evidence" value="ECO:0000314"/>
    <property type="project" value="UniProtKB"/>
</dbReference>
<dbReference type="GO" id="GO:2000781">
    <property type="term" value="P:positive regulation of double-strand break repair"/>
    <property type="evidence" value="ECO:0000315"/>
    <property type="project" value="UniProtKB"/>
</dbReference>
<dbReference type="GO" id="GO:0045944">
    <property type="term" value="P:positive regulation of transcription by RNA polymerase II"/>
    <property type="evidence" value="ECO:0000314"/>
    <property type="project" value="UniProtKB"/>
</dbReference>
<dbReference type="GO" id="GO:0051726">
    <property type="term" value="P:regulation of cell cycle"/>
    <property type="evidence" value="ECO:0000315"/>
    <property type="project" value="BHF-UCL"/>
</dbReference>
<dbReference type="GO" id="GO:0042127">
    <property type="term" value="P:regulation of cell population proliferation"/>
    <property type="evidence" value="ECO:0000318"/>
    <property type="project" value="GO_Central"/>
</dbReference>
<dbReference type="GO" id="GO:0007346">
    <property type="term" value="P:regulation of mitotic cell cycle"/>
    <property type="evidence" value="ECO:0000314"/>
    <property type="project" value="UniProt"/>
</dbReference>
<dbReference type="GO" id="GO:0046578">
    <property type="term" value="P:regulation of Ras protein signal transduction"/>
    <property type="evidence" value="ECO:0000315"/>
    <property type="project" value="BHF-UCL"/>
</dbReference>
<dbReference type="GO" id="GO:2000377">
    <property type="term" value="P:regulation of reactive oxygen species metabolic process"/>
    <property type="evidence" value="ECO:0000315"/>
    <property type="project" value="BHF-UCL"/>
</dbReference>
<dbReference type="GO" id="GO:0006357">
    <property type="term" value="P:regulation of transcription by RNA polymerase II"/>
    <property type="evidence" value="ECO:0000318"/>
    <property type="project" value="GO_Central"/>
</dbReference>
<dbReference type="CDD" id="cd20029">
    <property type="entry name" value="FH_FOXM"/>
    <property type="match status" value="1"/>
</dbReference>
<dbReference type="DisProt" id="DP02411"/>
<dbReference type="FunFam" id="1.10.10.10:FF:000245">
    <property type="entry name" value="forkhead box protein M1 isoform X2"/>
    <property type="match status" value="1"/>
</dbReference>
<dbReference type="Gene3D" id="1.10.10.10">
    <property type="entry name" value="Winged helix-like DNA-binding domain superfamily/Winged helix DNA-binding domain"/>
    <property type="match status" value="1"/>
</dbReference>
<dbReference type="InterPro" id="IPR047516">
    <property type="entry name" value="FH_FOXM1"/>
</dbReference>
<dbReference type="InterPro" id="IPR001766">
    <property type="entry name" value="Fork_head_dom"/>
</dbReference>
<dbReference type="InterPro" id="IPR042839">
    <property type="entry name" value="FOXM1"/>
</dbReference>
<dbReference type="InterPro" id="IPR018122">
    <property type="entry name" value="TF_fork_head_CS_1"/>
</dbReference>
<dbReference type="InterPro" id="IPR030456">
    <property type="entry name" value="TF_fork_head_CS_2"/>
</dbReference>
<dbReference type="InterPro" id="IPR036388">
    <property type="entry name" value="WH-like_DNA-bd_sf"/>
</dbReference>
<dbReference type="InterPro" id="IPR036390">
    <property type="entry name" value="WH_DNA-bd_sf"/>
</dbReference>
<dbReference type="PANTHER" id="PTHR46878">
    <property type="entry name" value="FORKHEAD BOX PROTEIN M1"/>
    <property type="match status" value="1"/>
</dbReference>
<dbReference type="PANTHER" id="PTHR46878:SF1">
    <property type="entry name" value="FORKHEAD BOX PROTEIN M1"/>
    <property type="match status" value="1"/>
</dbReference>
<dbReference type="Pfam" id="PF00250">
    <property type="entry name" value="Forkhead"/>
    <property type="match status" value="1"/>
</dbReference>
<dbReference type="PRINTS" id="PR00053">
    <property type="entry name" value="FORKHEAD"/>
</dbReference>
<dbReference type="SMART" id="SM00339">
    <property type="entry name" value="FH"/>
    <property type="match status" value="1"/>
</dbReference>
<dbReference type="SUPFAM" id="SSF46785">
    <property type="entry name" value="Winged helix' DNA-binding domain"/>
    <property type="match status" value="1"/>
</dbReference>
<dbReference type="PROSITE" id="PS00657">
    <property type="entry name" value="FORK_HEAD_1"/>
    <property type="match status" value="1"/>
</dbReference>
<dbReference type="PROSITE" id="PS00658">
    <property type="entry name" value="FORK_HEAD_2"/>
    <property type="match status" value="1"/>
</dbReference>
<dbReference type="PROSITE" id="PS50039">
    <property type="entry name" value="FORK_HEAD_3"/>
    <property type="match status" value="1"/>
</dbReference>